<organism>
    <name type="scientific">Anopheles gambiae</name>
    <name type="common">African malaria mosquito</name>
    <dbReference type="NCBI Taxonomy" id="7165"/>
    <lineage>
        <taxon>Eukaryota</taxon>
        <taxon>Metazoa</taxon>
        <taxon>Ecdysozoa</taxon>
        <taxon>Arthropoda</taxon>
        <taxon>Hexapoda</taxon>
        <taxon>Insecta</taxon>
        <taxon>Pterygota</taxon>
        <taxon>Neoptera</taxon>
        <taxon>Endopterygota</taxon>
        <taxon>Diptera</taxon>
        <taxon>Nematocera</taxon>
        <taxon>Culicoidea</taxon>
        <taxon>Culicidae</taxon>
        <taxon>Anophelinae</taxon>
        <taxon>Anopheles</taxon>
    </lineage>
</organism>
<sequence length="152" mass="16285">MAPSRKNKVAKEEVQVSLGPQVRDGEVVFGVAHIYASFNDTFVHVTDLSGKETISRVTGGMKVKADRDEASPYAAMLAAQDVAEKCKSLGITALHIKLRATGGNRTKTPGPGAQSALRALARSSMKIGRIEDVTPIPSDSTRRKGGRRGRRL</sequence>
<accession>Q7QBX2</accession>
<gene>
    <name evidence="1" type="primary">RpS14b</name>
    <name type="ORF">AGAP002346</name>
</gene>
<protein>
    <recommendedName>
        <fullName evidence="4">Small ribosomal subunit protein uS11B</fullName>
    </recommendedName>
    <alternativeName>
        <fullName>40S ribosomal protein S14b</fullName>
    </alternativeName>
</protein>
<proteinExistence type="inferred from homology"/>
<keyword id="KW-1185">Reference proteome</keyword>
<keyword id="KW-0687">Ribonucleoprotein</keyword>
<keyword id="KW-0689">Ribosomal protein</keyword>
<reference evidence="5" key="1">
    <citation type="journal article" date="2002" name="Science">
        <title>The genome sequence of the malaria mosquito Anopheles gambiae.</title>
        <authorList>
            <person name="Holt R.A."/>
            <person name="Subramanian G.M."/>
            <person name="Halpern A."/>
            <person name="Sutton G.G."/>
            <person name="Charlab R."/>
            <person name="Nusskern D.R."/>
            <person name="Wincker P."/>
            <person name="Clark A.G."/>
            <person name="Ribeiro J.M.C."/>
            <person name="Wides R."/>
            <person name="Salzberg S.L."/>
            <person name="Loftus B.J."/>
            <person name="Yandell M.D."/>
            <person name="Majoros W.H."/>
            <person name="Rusch D.B."/>
            <person name="Lai Z."/>
            <person name="Kraft C.L."/>
            <person name="Abril J.F."/>
            <person name="Anthouard V."/>
            <person name="Arensburger P."/>
            <person name="Atkinson P.W."/>
            <person name="Baden H."/>
            <person name="de Berardinis V."/>
            <person name="Baldwin D."/>
            <person name="Benes V."/>
            <person name="Biedler J."/>
            <person name="Blass C."/>
            <person name="Bolanos R."/>
            <person name="Boscus D."/>
            <person name="Barnstead M."/>
            <person name="Cai S."/>
            <person name="Center A."/>
            <person name="Chaturverdi K."/>
            <person name="Christophides G.K."/>
            <person name="Chrystal M.A.M."/>
            <person name="Clamp M."/>
            <person name="Cravchik A."/>
            <person name="Curwen V."/>
            <person name="Dana A."/>
            <person name="Delcher A."/>
            <person name="Dew I."/>
            <person name="Evans C.A."/>
            <person name="Flanigan M."/>
            <person name="Grundschober-Freimoser A."/>
            <person name="Friedli L."/>
            <person name="Gu Z."/>
            <person name="Guan P."/>
            <person name="Guigo R."/>
            <person name="Hillenmeyer M.E."/>
            <person name="Hladun S.L."/>
            <person name="Hogan J.R."/>
            <person name="Hong Y.S."/>
            <person name="Hoover J."/>
            <person name="Jaillon O."/>
            <person name="Ke Z."/>
            <person name="Kodira C.D."/>
            <person name="Kokoza E."/>
            <person name="Koutsos A."/>
            <person name="Letunic I."/>
            <person name="Levitsky A.A."/>
            <person name="Liang Y."/>
            <person name="Lin J.-J."/>
            <person name="Lobo N.F."/>
            <person name="Lopez J.R."/>
            <person name="Malek J.A."/>
            <person name="McIntosh T.C."/>
            <person name="Meister S."/>
            <person name="Miller J.R."/>
            <person name="Mobarry C."/>
            <person name="Mongin E."/>
            <person name="Murphy S.D."/>
            <person name="O'Brochta D.A."/>
            <person name="Pfannkoch C."/>
            <person name="Qi R."/>
            <person name="Regier M.A."/>
            <person name="Remington K."/>
            <person name="Shao H."/>
            <person name="Sharakhova M.V."/>
            <person name="Sitter C.D."/>
            <person name="Shetty J."/>
            <person name="Smith T.J."/>
            <person name="Strong R."/>
            <person name="Sun J."/>
            <person name="Thomasova D."/>
            <person name="Ton L.Q."/>
            <person name="Topalis P."/>
            <person name="Tu Z.J."/>
            <person name="Unger M.F."/>
            <person name="Walenz B."/>
            <person name="Wang A.H."/>
            <person name="Wang J."/>
            <person name="Wang M."/>
            <person name="Wang X."/>
            <person name="Woodford K.J."/>
            <person name="Wortman J.R."/>
            <person name="Wu M."/>
            <person name="Yao A."/>
            <person name="Zdobnov E.M."/>
            <person name="Zhang H."/>
            <person name="Zhao Q."/>
            <person name="Zhao S."/>
            <person name="Zhu S.C."/>
            <person name="Zhimulev I."/>
            <person name="Coluzzi M."/>
            <person name="della Torre A."/>
            <person name="Roth C.W."/>
            <person name="Louis C."/>
            <person name="Kalush F."/>
            <person name="Mural R.J."/>
            <person name="Myers E.W."/>
            <person name="Adams M.D."/>
            <person name="Smith H.O."/>
            <person name="Broder S."/>
            <person name="Gardner M.J."/>
            <person name="Fraser C.M."/>
            <person name="Birney E."/>
            <person name="Bork P."/>
            <person name="Brey P.T."/>
            <person name="Venter J.C."/>
            <person name="Weissenbach J."/>
            <person name="Kafatos F.C."/>
            <person name="Collins F.H."/>
            <person name="Hoffman S.L."/>
        </authorList>
    </citation>
    <scope>NUCLEOTIDE SEQUENCE [LARGE SCALE GENOMIC DNA]</scope>
    <source>
        <strain>PEST</strain>
    </source>
</reference>
<feature type="chain" id="PRO_0000372798" description="Small ribosomal subunit protein uS11B">
    <location>
        <begin position="1"/>
        <end position="152"/>
    </location>
</feature>
<feature type="region of interest" description="Disordered" evidence="3">
    <location>
        <begin position="131"/>
        <end position="152"/>
    </location>
</feature>
<feature type="compositionally biased region" description="Basic residues" evidence="3">
    <location>
        <begin position="143"/>
        <end position="152"/>
    </location>
</feature>
<comment type="similarity">
    <text evidence="2">Belongs to the universal ribosomal protein uS11 family.</text>
</comment>
<dbReference type="EMBL" id="AAAB01008859">
    <property type="protein sequence ID" value="EAA08220.2"/>
    <property type="molecule type" value="Genomic_DNA"/>
</dbReference>
<dbReference type="SMR" id="Q7QBX2"/>
<dbReference type="FunCoup" id="Q7QBX2">
    <property type="interactions" value="1346"/>
</dbReference>
<dbReference type="STRING" id="7165.Q7QBX2"/>
<dbReference type="PaxDb" id="7165-AGAP002346-PA"/>
<dbReference type="EnsemblMetazoa" id="AGAP002346-RA">
    <property type="protein sequence ID" value="AGAP002346-PA"/>
    <property type="gene ID" value="AGAP002346"/>
</dbReference>
<dbReference type="GeneID" id="1273618"/>
<dbReference type="KEGG" id="aga:1273618"/>
<dbReference type="VEuPathDB" id="VectorBase:AGAMI1_001182"/>
<dbReference type="VEuPathDB" id="VectorBase:AGAP002346"/>
<dbReference type="eggNOG" id="KOG0407">
    <property type="taxonomic scope" value="Eukaryota"/>
</dbReference>
<dbReference type="HOGENOM" id="CLU_072439_6_0_1"/>
<dbReference type="InParanoid" id="Q7QBX2"/>
<dbReference type="OMA" id="KWGVAHI"/>
<dbReference type="PhylomeDB" id="Q7QBX2"/>
<dbReference type="Proteomes" id="UP000007062">
    <property type="component" value="Chromosome 2R"/>
</dbReference>
<dbReference type="GO" id="GO:0022627">
    <property type="term" value="C:cytosolic small ribosomal subunit"/>
    <property type="evidence" value="ECO:0000318"/>
    <property type="project" value="GO_Central"/>
</dbReference>
<dbReference type="GO" id="GO:0003735">
    <property type="term" value="F:structural constituent of ribosome"/>
    <property type="evidence" value="ECO:0000318"/>
    <property type="project" value="GO_Central"/>
</dbReference>
<dbReference type="GO" id="GO:0000028">
    <property type="term" value="P:ribosomal small subunit assembly"/>
    <property type="evidence" value="ECO:0000318"/>
    <property type="project" value="GO_Central"/>
</dbReference>
<dbReference type="GO" id="GO:0006412">
    <property type="term" value="P:translation"/>
    <property type="evidence" value="ECO:0000318"/>
    <property type="project" value="GO_Central"/>
</dbReference>
<dbReference type="FunFam" id="3.30.420.80:FF:000002">
    <property type="entry name" value="40S ribosomal protein S14"/>
    <property type="match status" value="1"/>
</dbReference>
<dbReference type="Gene3D" id="3.30.420.80">
    <property type="entry name" value="Ribosomal protein S11"/>
    <property type="match status" value="1"/>
</dbReference>
<dbReference type="HAMAP" id="MF_01310">
    <property type="entry name" value="Ribosomal_uS11"/>
    <property type="match status" value="1"/>
</dbReference>
<dbReference type="InterPro" id="IPR001971">
    <property type="entry name" value="Ribosomal_uS11"/>
</dbReference>
<dbReference type="InterPro" id="IPR018102">
    <property type="entry name" value="Ribosomal_uS11_CS"/>
</dbReference>
<dbReference type="InterPro" id="IPR036967">
    <property type="entry name" value="Ribosomal_uS11_sf"/>
</dbReference>
<dbReference type="NCBIfam" id="NF007176">
    <property type="entry name" value="PRK09607.1"/>
    <property type="match status" value="1"/>
</dbReference>
<dbReference type="PANTHER" id="PTHR11759">
    <property type="entry name" value="40S RIBOSOMAL PROTEIN S14/30S RIBOSOMAL PROTEIN S11"/>
    <property type="match status" value="1"/>
</dbReference>
<dbReference type="Pfam" id="PF00411">
    <property type="entry name" value="Ribosomal_S11"/>
    <property type="match status" value="1"/>
</dbReference>
<dbReference type="PIRSF" id="PIRSF002131">
    <property type="entry name" value="Ribosomal_S11"/>
    <property type="match status" value="1"/>
</dbReference>
<dbReference type="SUPFAM" id="SSF53137">
    <property type="entry name" value="Translational machinery components"/>
    <property type="match status" value="1"/>
</dbReference>
<dbReference type="PROSITE" id="PS00054">
    <property type="entry name" value="RIBOSOMAL_S11"/>
    <property type="match status" value="1"/>
</dbReference>
<evidence type="ECO:0000250" key="1">
    <source>
        <dbReference type="UniProtKB" id="P14130"/>
    </source>
</evidence>
<evidence type="ECO:0000255" key="2"/>
<evidence type="ECO:0000256" key="3">
    <source>
        <dbReference type="SAM" id="MobiDB-lite"/>
    </source>
</evidence>
<evidence type="ECO:0000305" key="4"/>
<evidence type="ECO:0000312" key="5">
    <source>
        <dbReference type="EMBL" id="EAA08220.2"/>
    </source>
</evidence>
<name>RS14B_ANOGA</name>